<organism>
    <name type="scientific">Erythrobacter litoralis (strain HTCC2594)</name>
    <dbReference type="NCBI Taxonomy" id="314225"/>
    <lineage>
        <taxon>Bacteria</taxon>
        <taxon>Pseudomonadati</taxon>
        <taxon>Pseudomonadota</taxon>
        <taxon>Alphaproteobacteria</taxon>
        <taxon>Sphingomonadales</taxon>
        <taxon>Erythrobacteraceae</taxon>
        <taxon>Erythrobacter/Porphyrobacter group</taxon>
        <taxon>Erythrobacter</taxon>
    </lineage>
</organism>
<proteinExistence type="inferred from homology"/>
<protein>
    <recommendedName>
        <fullName evidence="1">Phosphoglucosamine mutase</fullName>
        <ecNumber evidence="1">5.4.2.10</ecNumber>
    </recommendedName>
</protein>
<gene>
    <name evidence="1" type="primary">glmM</name>
    <name type="ordered locus">ELI_10245</name>
</gene>
<feature type="chain" id="PRO_0000305638" description="Phosphoglucosamine mutase">
    <location>
        <begin position="1"/>
        <end position="452"/>
    </location>
</feature>
<feature type="active site" description="Phosphoserine intermediate" evidence="1">
    <location>
        <position position="109"/>
    </location>
</feature>
<feature type="binding site" description="via phosphate group" evidence="1">
    <location>
        <position position="109"/>
    </location>
    <ligand>
        <name>Mg(2+)</name>
        <dbReference type="ChEBI" id="CHEBI:18420"/>
    </ligand>
</feature>
<feature type="binding site" evidence="1">
    <location>
        <position position="248"/>
    </location>
    <ligand>
        <name>Mg(2+)</name>
        <dbReference type="ChEBI" id="CHEBI:18420"/>
    </ligand>
</feature>
<feature type="binding site" evidence="1">
    <location>
        <position position="250"/>
    </location>
    <ligand>
        <name>Mg(2+)</name>
        <dbReference type="ChEBI" id="CHEBI:18420"/>
    </ligand>
</feature>
<feature type="binding site" evidence="1">
    <location>
        <position position="252"/>
    </location>
    <ligand>
        <name>Mg(2+)</name>
        <dbReference type="ChEBI" id="CHEBI:18420"/>
    </ligand>
</feature>
<feature type="modified residue" description="Phosphoserine" evidence="1">
    <location>
        <position position="109"/>
    </location>
</feature>
<accession>Q2N850</accession>
<sequence>MSQQGQAVARKFFGTDGIRGETNTGNMTPEIAMRVAQAAGEYFRRGDHRHRVVIGKDTRLSGYMMEAALVAGFTSVGMDVIQTGPLPTPAVALLTKEMRADLGVMISASHNPYRDNGIKLFGPDGFKLSDETELAIEQGIVSEPALVPAAEIGRARRIEDSRGRYIHALKQSVSDETRFDSLKVVVDCANGAAYQVAPSAIWELGAEIITLGVTPNGTNINDGVGSTSLDAIKRTVVEEGADIGIALDGDADRLIVIDEKGEAVDGDQIMGLIATRMAEKQALRGGGVVATVMSNLGLERYLDSKNLRLERTQVGDRYVLERMKTGGFNIGGEQSGHMILLDHATTGDGTVAALRVLASLVNSGKPASEVLHVFEKVPQLLKNVRYEGGRPLDKDSVQTAIADAEKALDGKGRLVIRPSGTEPVIRVMAEGDDADQVETVVDQICDAVKAAG</sequence>
<keyword id="KW-0413">Isomerase</keyword>
<keyword id="KW-0460">Magnesium</keyword>
<keyword id="KW-0479">Metal-binding</keyword>
<keyword id="KW-0597">Phosphoprotein</keyword>
<keyword id="KW-1185">Reference proteome</keyword>
<comment type="function">
    <text evidence="1">Catalyzes the conversion of glucosamine-6-phosphate to glucosamine-1-phosphate.</text>
</comment>
<comment type="catalytic activity">
    <reaction evidence="1">
        <text>alpha-D-glucosamine 1-phosphate = D-glucosamine 6-phosphate</text>
        <dbReference type="Rhea" id="RHEA:23424"/>
        <dbReference type="ChEBI" id="CHEBI:58516"/>
        <dbReference type="ChEBI" id="CHEBI:58725"/>
        <dbReference type="EC" id="5.4.2.10"/>
    </reaction>
</comment>
<comment type="cofactor">
    <cofactor evidence="1">
        <name>Mg(2+)</name>
        <dbReference type="ChEBI" id="CHEBI:18420"/>
    </cofactor>
    <text evidence="1">Binds 1 Mg(2+) ion per subunit.</text>
</comment>
<comment type="PTM">
    <text evidence="1">Activated by phosphorylation.</text>
</comment>
<comment type="similarity">
    <text evidence="1">Belongs to the phosphohexose mutase family.</text>
</comment>
<evidence type="ECO:0000255" key="1">
    <source>
        <dbReference type="HAMAP-Rule" id="MF_01554"/>
    </source>
</evidence>
<name>GLMM_ERYLH</name>
<reference key="1">
    <citation type="journal article" date="2009" name="J. Bacteriol.">
        <title>Complete genome sequence of Erythrobacter litoralis HTCC2594.</title>
        <authorList>
            <person name="Oh H.M."/>
            <person name="Giovannoni S.J."/>
            <person name="Ferriera S."/>
            <person name="Johnson J."/>
            <person name="Cho J.C."/>
        </authorList>
    </citation>
    <scope>NUCLEOTIDE SEQUENCE [LARGE SCALE GENOMIC DNA]</scope>
    <source>
        <strain>HTCC2594</strain>
    </source>
</reference>
<dbReference type="EC" id="5.4.2.10" evidence="1"/>
<dbReference type="EMBL" id="CP000157">
    <property type="protein sequence ID" value="ABC64141.1"/>
    <property type="molecule type" value="Genomic_DNA"/>
</dbReference>
<dbReference type="SMR" id="Q2N850"/>
<dbReference type="STRING" id="314225.ELI_10245"/>
<dbReference type="KEGG" id="eli:ELI_10245"/>
<dbReference type="eggNOG" id="COG1109">
    <property type="taxonomic scope" value="Bacteria"/>
</dbReference>
<dbReference type="HOGENOM" id="CLU_016950_7_0_5"/>
<dbReference type="Proteomes" id="UP000008808">
    <property type="component" value="Chromosome"/>
</dbReference>
<dbReference type="GO" id="GO:0005829">
    <property type="term" value="C:cytosol"/>
    <property type="evidence" value="ECO:0007669"/>
    <property type="project" value="TreeGrafter"/>
</dbReference>
<dbReference type="GO" id="GO:0000287">
    <property type="term" value="F:magnesium ion binding"/>
    <property type="evidence" value="ECO:0007669"/>
    <property type="project" value="UniProtKB-UniRule"/>
</dbReference>
<dbReference type="GO" id="GO:0008966">
    <property type="term" value="F:phosphoglucosamine mutase activity"/>
    <property type="evidence" value="ECO:0007669"/>
    <property type="project" value="UniProtKB-UniRule"/>
</dbReference>
<dbReference type="GO" id="GO:0004615">
    <property type="term" value="F:phosphomannomutase activity"/>
    <property type="evidence" value="ECO:0007669"/>
    <property type="project" value="TreeGrafter"/>
</dbReference>
<dbReference type="GO" id="GO:0005975">
    <property type="term" value="P:carbohydrate metabolic process"/>
    <property type="evidence" value="ECO:0007669"/>
    <property type="project" value="InterPro"/>
</dbReference>
<dbReference type="GO" id="GO:0009252">
    <property type="term" value="P:peptidoglycan biosynthetic process"/>
    <property type="evidence" value="ECO:0007669"/>
    <property type="project" value="TreeGrafter"/>
</dbReference>
<dbReference type="GO" id="GO:0006048">
    <property type="term" value="P:UDP-N-acetylglucosamine biosynthetic process"/>
    <property type="evidence" value="ECO:0007669"/>
    <property type="project" value="TreeGrafter"/>
</dbReference>
<dbReference type="CDD" id="cd05802">
    <property type="entry name" value="GlmM"/>
    <property type="match status" value="1"/>
</dbReference>
<dbReference type="FunFam" id="3.30.310.50:FF:000001">
    <property type="entry name" value="Phosphoglucosamine mutase"/>
    <property type="match status" value="1"/>
</dbReference>
<dbReference type="FunFam" id="3.40.120.10:FF:000001">
    <property type="entry name" value="Phosphoglucosamine mutase"/>
    <property type="match status" value="1"/>
</dbReference>
<dbReference type="FunFam" id="3.40.120.10:FF:000002">
    <property type="entry name" value="Phosphoglucosamine mutase"/>
    <property type="match status" value="1"/>
</dbReference>
<dbReference type="Gene3D" id="3.40.120.10">
    <property type="entry name" value="Alpha-D-Glucose-1,6-Bisphosphate, subunit A, domain 3"/>
    <property type="match status" value="3"/>
</dbReference>
<dbReference type="Gene3D" id="3.30.310.50">
    <property type="entry name" value="Alpha-D-phosphohexomutase, C-terminal domain"/>
    <property type="match status" value="1"/>
</dbReference>
<dbReference type="HAMAP" id="MF_01554_B">
    <property type="entry name" value="GlmM_B"/>
    <property type="match status" value="1"/>
</dbReference>
<dbReference type="InterPro" id="IPR005844">
    <property type="entry name" value="A-D-PHexomutase_a/b/a-I"/>
</dbReference>
<dbReference type="InterPro" id="IPR016055">
    <property type="entry name" value="A-D-PHexomutase_a/b/a-I/II/III"/>
</dbReference>
<dbReference type="InterPro" id="IPR005845">
    <property type="entry name" value="A-D-PHexomutase_a/b/a-II"/>
</dbReference>
<dbReference type="InterPro" id="IPR005846">
    <property type="entry name" value="A-D-PHexomutase_a/b/a-III"/>
</dbReference>
<dbReference type="InterPro" id="IPR005843">
    <property type="entry name" value="A-D-PHexomutase_C"/>
</dbReference>
<dbReference type="InterPro" id="IPR036900">
    <property type="entry name" value="A-D-PHexomutase_C_sf"/>
</dbReference>
<dbReference type="InterPro" id="IPR016066">
    <property type="entry name" value="A-D-PHexomutase_CS"/>
</dbReference>
<dbReference type="InterPro" id="IPR005841">
    <property type="entry name" value="Alpha-D-phosphohexomutase_SF"/>
</dbReference>
<dbReference type="InterPro" id="IPR006352">
    <property type="entry name" value="GlmM_bact"/>
</dbReference>
<dbReference type="InterPro" id="IPR050060">
    <property type="entry name" value="Phosphoglucosamine_mutase"/>
</dbReference>
<dbReference type="NCBIfam" id="TIGR01455">
    <property type="entry name" value="glmM"/>
    <property type="match status" value="1"/>
</dbReference>
<dbReference type="NCBIfam" id="NF008139">
    <property type="entry name" value="PRK10887.1"/>
    <property type="match status" value="1"/>
</dbReference>
<dbReference type="PANTHER" id="PTHR42946:SF1">
    <property type="entry name" value="PHOSPHOGLUCOMUTASE (ALPHA-D-GLUCOSE-1,6-BISPHOSPHATE-DEPENDENT)"/>
    <property type="match status" value="1"/>
</dbReference>
<dbReference type="PANTHER" id="PTHR42946">
    <property type="entry name" value="PHOSPHOHEXOSE MUTASE"/>
    <property type="match status" value="1"/>
</dbReference>
<dbReference type="Pfam" id="PF02878">
    <property type="entry name" value="PGM_PMM_I"/>
    <property type="match status" value="1"/>
</dbReference>
<dbReference type="Pfam" id="PF02879">
    <property type="entry name" value="PGM_PMM_II"/>
    <property type="match status" value="1"/>
</dbReference>
<dbReference type="Pfam" id="PF02880">
    <property type="entry name" value="PGM_PMM_III"/>
    <property type="match status" value="1"/>
</dbReference>
<dbReference type="Pfam" id="PF00408">
    <property type="entry name" value="PGM_PMM_IV"/>
    <property type="match status" value="1"/>
</dbReference>
<dbReference type="PRINTS" id="PR00509">
    <property type="entry name" value="PGMPMM"/>
</dbReference>
<dbReference type="SUPFAM" id="SSF55957">
    <property type="entry name" value="Phosphoglucomutase, C-terminal domain"/>
    <property type="match status" value="1"/>
</dbReference>
<dbReference type="SUPFAM" id="SSF53738">
    <property type="entry name" value="Phosphoglucomutase, first 3 domains"/>
    <property type="match status" value="3"/>
</dbReference>
<dbReference type="PROSITE" id="PS00710">
    <property type="entry name" value="PGM_PMM"/>
    <property type="match status" value="1"/>
</dbReference>